<accession>P0AEP2</accession>
<accession>P37021</accession>
<proteinExistence type="inferred from homology"/>
<keyword id="KW-0997">Cell inner membrane</keyword>
<keyword id="KW-1003">Cell membrane</keyword>
<keyword id="KW-0472">Membrane</keyword>
<keyword id="KW-1185">Reference proteome</keyword>
<keyword id="KW-0762">Sugar transport</keyword>
<keyword id="KW-0769">Symport</keyword>
<keyword id="KW-0812">Transmembrane</keyword>
<keyword id="KW-1133">Transmembrane helix</keyword>
<keyword id="KW-0813">Transport</keyword>
<reference key="1">
    <citation type="journal article" date="2002" name="Proc. Natl. Acad. Sci. U.S.A.">
        <title>Extensive mosaic structure revealed by the complete genome sequence of uropathogenic Escherichia coli.</title>
        <authorList>
            <person name="Welch R.A."/>
            <person name="Burland V."/>
            <person name="Plunkett G. III"/>
            <person name="Redford P."/>
            <person name="Roesch P."/>
            <person name="Rasko D."/>
            <person name="Buckles E.L."/>
            <person name="Liou S.-R."/>
            <person name="Boutin A."/>
            <person name="Hackett J."/>
            <person name="Stroud D."/>
            <person name="Mayhew G.F."/>
            <person name="Rose D.J."/>
            <person name="Zhou S."/>
            <person name="Schwartz D.C."/>
            <person name="Perna N.T."/>
            <person name="Mobley H.L.T."/>
            <person name="Donnenberg M.S."/>
            <person name="Blattner F.R."/>
        </authorList>
    </citation>
    <scope>NUCLEOTIDE SEQUENCE [LARGE SCALE GENOMIC DNA]</scope>
    <source>
        <strain>CFT073 / ATCC 700928 / UPEC</strain>
    </source>
</reference>
<feature type="chain" id="PRO_0000050293" description="Galactose-proton symporter">
    <location>
        <begin position="1"/>
        <end position="464"/>
    </location>
</feature>
<feature type="topological domain" description="Cytoplasmic" evidence="2">
    <location>
        <begin position="1"/>
        <end position="15"/>
    </location>
</feature>
<feature type="transmembrane region" description="Helical; Name=1" evidence="2">
    <location>
        <begin position="16"/>
        <end position="36"/>
    </location>
</feature>
<feature type="topological domain" description="Periplasmic" evidence="2">
    <location>
        <begin position="37"/>
        <end position="56"/>
    </location>
</feature>
<feature type="transmembrane region" description="Helical; Name=2" evidence="2">
    <location>
        <begin position="57"/>
        <end position="77"/>
    </location>
</feature>
<feature type="topological domain" description="Cytoplasmic" evidence="2">
    <location>
        <begin position="78"/>
        <end position="84"/>
    </location>
</feature>
<feature type="transmembrane region" description="Helical; Name=3" evidence="2">
    <location>
        <begin position="85"/>
        <end position="105"/>
    </location>
</feature>
<feature type="topological domain" description="Periplasmic" evidence="2">
    <location>
        <begin position="106"/>
        <end position="112"/>
    </location>
</feature>
<feature type="transmembrane region" description="Helical; Name=4" evidence="2">
    <location>
        <begin position="113"/>
        <end position="133"/>
    </location>
</feature>
<feature type="topological domain" description="Cytoplasmic" evidence="2">
    <location>
        <begin position="134"/>
        <end position="139"/>
    </location>
</feature>
<feature type="transmembrane region" description="Helical; Name=5" evidence="2">
    <location>
        <begin position="140"/>
        <end position="160"/>
    </location>
</feature>
<feature type="topological domain" description="Periplasmic" evidence="2">
    <location>
        <begin position="161"/>
        <end position="171"/>
    </location>
</feature>
<feature type="transmembrane region" description="Helical; Name=6" evidence="2">
    <location>
        <begin position="172"/>
        <end position="192"/>
    </location>
</feature>
<feature type="topological domain" description="Cytoplasmic" evidence="2">
    <location>
        <begin position="193"/>
        <end position="250"/>
    </location>
</feature>
<feature type="transmembrane region" description="Helical; Name=7" evidence="2">
    <location>
        <begin position="251"/>
        <end position="271"/>
    </location>
</feature>
<feature type="topological domain" description="Periplasmic" evidence="2">
    <location>
        <begin position="272"/>
        <end position="290"/>
    </location>
</feature>
<feature type="transmembrane region" description="Helical; Name=8" evidence="2">
    <location>
        <begin position="291"/>
        <end position="311"/>
    </location>
</feature>
<feature type="topological domain" description="Cytoplasmic" evidence="2">
    <location>
        <begin position="312"/>
        <end position="321"/>
    </location>
</feature>
<feature type="transmembrane region" description="Helical; Name=9" evidence="2">
    <location>
        <begin position="322"/>
        <end position="342"/>
    </location>
</feature>
<feature type="topological domain" description="Periplasmic" evidence="2">
    <location>
        <begin position="343"/>
        <end position="351"/>
    </location>
</feature>
<feature type="transmembrane region" description="Helical; Name=10" evidence="2">
    <location>
        <begin position="352"/>
        <end position="372"/>
    </location>
</feature>
<feature type="topological domain" description="Cytoplasmic" evidence="2">
    <location>
        <begin position="373"/>
        <end position="394"/>
    </location>
</feature>
<feature type="transmembrane region" description="Helical; Name=11" evidence="2">
    <location>
        <begin position="395"/>
        <end position="415"/>
    </location>
</feature>
<feature type="topological domain" description="Periplasmic" evidence="2">
    <location>
        <position position="416"/>
    </location>
</feature>
<feature type="transmembrane region" description="Helical; Name=12" evidence="2">
    <location>
        <begin position="417"/>
        <end position="437"/>
    </location>
</feature>
<feature type="topological domain" description="Cytoplasmic" evidence="2">
    <location>
        <begin position="438"/>
        <end position="464"/>
    </location>
</feature>
<evidence type="ECO:0000250" key="1"/>
<evidence type="ECO:0000255" key="2"/>
<evidence type="ECO:0000305" key="3"/>
<sequence>MPDAKKQGRSNKAMTFFVCFLAALAGLLFGLDIGVIAGALPFIADEFQITSHTQEWVVSSMMFGAAVGAVGSGWLSFKLGRKKSLMIGAILFVAGSLFSAAAPNVEVLILSRVLLGLAVGVASYTAPLYLSEIAPEKIRGSMISMYQLMITIGILGAYLSDTAFSYTGAWRWMLGVIIIPAILLLIGVFFLPDSPRWFAAKRRFVDAERVLLRLRDTSAEAKRELDEIRESLQVKQSGWALFKENSNFRRAVFLGVLLQVMQQFTGMNVIMYYAPKIFELAGYTNTTEQMWGTVIVGLTNVLATFIAIGLVDRWGRKPTLTLGFLVMAAGMGVLGTMMHIGIHSPSAQYFAIAMLLMFIVGFAMSAGPLIWVLCSEIQPLKGRDFGITCSTATNWIANMIVGATFLTMLNTLGNANTFWVYAALNVLFILLTLWLVPETKHVSLEHIERNLMKGRKLREIGAHD</sequence>
<comment type="function">
    <text evidence="1">Uptake of galactose across the boundary membrane with the concomitant transport of protons into the cell (symport system).</text>
</comment>
<comment type="subcellular location">
    <subcellularLocation>
        <location evidence="1">Cell inner membrane</location>
        <topology evidence="1">Multi-pass membrane protein</topology>
    </subcellularLocation>
</comment>
<comment type="similarity">
    <text evidence="3">Belongs to the major facilitator superfamily. Sugar transporter (TC 2.A.1.1) family.</text>
</comment>
<comment type="sequence caution" evidence="3">
    <conflict type="erroneous initiation">
        <sequence resource="EMBL-CDS" id="AAN81977"/>
    </conflict>
</comment>
<protein>
    <recommendedName>
        <fullName>Galactose-proton symporter</fullName>
    </recommendedName>
    <alternativeName>
        <fullName>Galactose transporter</fullName>
    </alternativeName>
</protein>
<name>GALP_ECOL6</name>
<organism>
    <name type="scientific">Escherichia coli O6:H1 (strain CFT073 / ATCC 700928 / UPEC)</name>
    <dbReference type="NCBI Taxonomy" id="199310"/>
    <lineage>
        <taxon>Bacteria</taxon>
        <taxon>Pseudomonadati</taxon>
        <taxon>Pseudomonadota</taxon>
        <taxon>Gammaproteobacteria</taxon>
        <taxon>Enterobacterales</taxon>
        <taxon>Enterobacteriaceae</taxon>
        <taxon>Escherichia</taxon>
    </lineage>
</organism>
<gene>
    <name type="primary">galP</name>
    <name type="ordered locus">c3529</name>
</gene>
<dbReference type="EMBL" id="AE014075">
    <property type="protein sequence ID" value="AAN81977.1"/>
    <property type="status" value="ALT_INIT"/>
    <property type="molecule type" value="Genomic_DNA"/>
</dbReference>
<dbReference type="RefSeq" id="WP_001112301.1">
    <property type="nucleotide sequence ID" value="NZ_CP051263.1"/>
</dbReference>
<dbReference type="SMR" id="P0AEP2"/>
<dbReference type="STRING" id="199310.c3529"/>
<dbReference type="GeneID" id="93779054"/>
<dbReference type="KEGG" id="ecc:c3529"/>
<dbReference type="eggNOG" id="COG2814">
    <property type="taxonomic scope" value="Bacteria"/>
</dbReference>
<dbReference type="HOGENOM" id="CLU_001265_30_5_6"/>
<dbReference type="Proteomes" id="UP000001410">
    <property type="component" value="Chromosome"/>
</dbReference>
<dbReference type="GO" id="GO:0005886">
    <property type="term" value="C:plasma membrane"/>
    <property type="evidence" value="ECO:0007669"/>
    <property type="project" value="UniProtKB-SubCell"/>
</dbReference>
<dbReference type="GO" id="GO:0015293">
    <property type="term" value="F:symporter activity"/>
    <property type="evidence" value="ECO:0007669"/>
    <property type="project" value="UniProtKB-KW"/>
</dbReference>
<dbReference type="CDD" id="cd17315">
    <property type="entry name" value="MFS_GLUT_like"/>
    <property type="match status" value="1"/>
</dbReference>
<dbReference type="FunFam" id="1.20.1250.20:FF:000008">
    <property type="entry name" value="Galactose-proton symporter (Galactose transporter)"/>
    <property type="match status" value="1"/>
</dbReference>
<dbReference type="Gene3D" id="1.20.1250.20">
    <property type="entry name" value="MFS general substrate transporter like domains"/>
    <property type="match status" value="1"/>
</dbReference>
<dbReference type="InterPro" id="IPR020846">
    <property type="entry name" value="MFS_dom"/>
</dbReference>
<dbReference type="InterPro" id="IPR005828">
    <property type="entry name" value="MFS_sugar_transport-like"/>
</dbReference>
<dbReference type="InterPro" id="IPR036259">
    <property type="entry name" value="MFS_trans_sf"/>
</dbReference>
<dbReference type="InterPro" id="IPR050814">
    <property type="entry name" value="Myo-inositol_Transporter"/>
</dbReference>
<dbReference type="InterPro" id="IPR003663">
    <property type="entry name" value="Sugar/inositol_transpt"/>
</dbReference>
<dbReference type="InterPro" id="IPR005829">
    <property type="entry name" value="Sugar_transporter_CS"/>
</dbReference>
<dbReference type="NCBIfam" id="TIGR00879">
    <property type="entry name" value="SP"/>
    <property type="match status" value="1"/>
</dbReference>
<dbReference type="PANTHER" id="PTHR48020">
    <property type="entry name" value="PROTON MYO-INOSITOL COTRANSPORTER"/>
    <property type="match status" value="1"/>
</dbReference>
<dbReference type="PANTHER" id="PTHR48020:SF12">
    <property type="entry name" value="PROTON MYO-INOSITOL COTRANSPORTER"/>
    <property type="match status" value="1"/>
</dbReference>
<dbReference type="Pfam" id="PF00083">
    <property type="entry name" value="Sugar_tr"/>
    <property type="match status" value="1"/>
</dbReference>
<dbReference type="PRINTS" id="PR00171">
    <property type="entry name" value="SUGRTRNSPORT"/>
</dbReference>
<dbReference type="SUPFAM" id="SSF103473">
    <property type="entry name" value="MFS general substrate transporter"/>
    <property type="match status" value="1"/>
</dbReference>
<dbReference type="PROSITE" id="PS50850">
    <property type="entry name" value="MFS"/>
    <property type="match status" value="1"/>
</dbReference>
<dbReference type="PROSITE" id="PS00216">
    <property type="entry name" value="SUGAR_TRANSPORT_1"/>
    <property type="match status" value="1"/>
</dbReference>
<dbReference type="PROSITE" id="PS00217">
    <property type="entry name" value="SUGAR_TRANSPORT_2"/>
    <property type="match status" value="1"/>
</dbReference>